<evidence type="ECO:0000250" key="1"/>
<evidence type="ECO:0000250" key="2">
    <source>
        <dbReference type="UniProtKB" id="P40078"/>
    </source>
</evidence>
<evidence type="ECO:0000255" key="3">
    <source>
        <dbReference type="PROSITE-ProRule" id="PRU00768"/>
    </source>
</evidence>
<evidence type="ECO:0000256" key="4">
    <source>
        <dbReference type="SAM" id="MobiDB-lite"/>
    </source>
</evidence>
<evidence type="ECO:0000305" key="5"/>
<reference key="1">
    <citation type="journal article" date="2009" name="Nature">
        <title>Evolution of pathogenicity and sexual reproduction in eight Candida genomes.</title>
        <authorList>
            <person name="Butler G."/>
            <person name="Rasmussen M.D."/>
            <person name="Lin M.F."/>
            <person name="Santos M.A.S."/>
            <person name="Sakthikumar S."/>
            <person name="Munro C.A."/>
            <person name="Rheinbay E."/>
            <person name="Grabherr M."/>
            <person name="Forche A."/>
            <person name="Reedy J.L."/>
            <person name="Agrafioti I."/>
            <person name="Arnaud M.B."/>
            <person name="Bates S."/>
            <person name="Brown A.J.P."/>
            <person name="Brunke S."/>
            <person name="Costanzo M.C."/>
            <person name="Fitzpatrick D.A."/>
            <person name="de Groot P.W.J."/>
            <person name="Harris D."/>
            <person name="Hoyer L.L."/>
            <person name="Hube B."/>
            <person name="Klis F.M."/>
            <person name="Kodira C."/>
            <person name="Lennard N."/>
            <person name="Logue M.E."/>
            <person name="Martin R."/>
            <person name="Neiman A.M."/>
            <person name="Nikolaou E."/>
            <person name="Quail M.A."/>
            <person name="Quinn J."/>
            <person name="Santos M.C."/>
            <person name="Schmitzberger F.F."/>
            <person name="Sherlock G."/>
            <person name="Shah P."/>
            <person name="Silverstein K.A.T."/>
            <person name="Skrzypek M.S."/>
            <person name="Soll D."/>
            <person name="Staggs R."/>
            <person name="Stansfield I."/>
            <person name="Stumpf M.P.H."/>
            <person name="Sudbery P.E."/>
            <person name="Srikantha T."/>
            <person name="Zeng Q."/>
            <person name="Berman J."/>
            <person name="Berriman M."/>
            <person name="Heitman J."/>
            <person name="Gow N.A.R."/>
            <person name="Lorenz M.C."/>
            <person name="Birren B.W."/>
            <person name="Kellis M."/>
            <person name="Cuomo C.A."/>
        </authorList>
    </citation>
    <scope>NUCLEOTIDE SEQUENCE [LARGE SCALE GENOMIC DNA]</scope>
    <source>
        <strain>ATCC 6260 / CBS 566 / DSM 6381 / JCM 1539 / NBRC 10279 / NRRL Y-324</strain>
    </source>
</reference>
<sequence>MPQNEYIEKHIKQHGRRLDHEERKRKRAAREGHRVAKDAQTLKGWRGKQFAKQRYSEKVAMKKKIKAHQESKVKGPSTPKENDGEALPTYLLDRKDTNTAKAISSSIKQKRMEKADKFSVPLPKVKGISEEEMFKVIKTGKSKTKSWKRMITKHTFVGEGFTRRPVKMERIIRPSALRQKKANVTHPELGVTVFLPILGVKKNPQSPMYTQLGVLTKGTIIEVNVSELGLVTAGGKVVWGKYAQITNEPDRDGCVNAVLLV</sequence>
<gene>
    <name type="primary">NSA2</name>
    <name type="ORF">PGUG_01042</name>
</gene>
<proteinExistence type="inferred from homology"/>
<comment type="function">
    <text evidence="1">Involved in the biogenesis of the 60S ribosomal subunit. May play a part in the quality control of pre-60S particles (By similarity).</text>
</comment>
<comment type="subunit">
    <text evidence="2">Component of the pre-66S ribosomal particle. Interacts with NOP7 and RRP1. Interacts with RSA4 (via WD repeats).</text>
</comment>
<comment type="subcellular location">
    <subcellularLocation>
        <location evidence="1">Nucleus</location>
        <location evidence="1">Nucleolus</location>
    </subcellularLocation>
</comment>
<comment type="similarity">
    <text evidence="5">Belongs to the eukaryotic ribosomal protein eS8 family. Ribosome biogenesis protein NSA2 subfamily.</text>
</comment>
<organism>
    <name type="scientific">Meyerozyma guilliermondii (strain ATCC 6260 / CBS 566 / DSM 6381 / JCM 1539 / NBRC 10279 / NRRL Y-324)</name>
    <name type="common">Yeast</name>
    <name type="synonym">Candida guilliermondii</name>
    <dbReference type="NCBI Taxonomy" id="294746"/>
    <lineage>
        <taxon>Eukaryota</taxon>
        <taxon>Fungi</taxon>
        <taxon>Dikarya</taxon>
        <taxon>Ascomycota</taxon>
        <taxon>Saccharomycotina</taxon>
        <taxon>Pichiomycetes</taxon>
        <taxon>Debaryomycetaceae</taxon>
        <taxon>Meyerozyma</taxon>
    </lineage>
</organism>
<name>NSA2_PICGU</name>
<protein>
    <recommendedName>
        <fullName>Ribosome biogenesis protein NSA2</fullName>
    </recommendedName>
</protein>
<accession>A5DCN7</accession>
<keyword id="KW-0539">Nucleus</keyword>
<keyword id="KW-1185">Reference proteome</keyword>
<keyword id="KW-0687">Ribonucleoprotein</keyword>
<keyword id="KW-0690">Ribosome biogenesis</keyword>
<keyword id="KW-0698">rRNA processing</keyword>
<feature type="chain" id="PRO_0000320423" description="Ribosome biogenesis protein NSA2">
    <location>
        <begin position="1"/>
        <end position="261"/>
    </location>
</feature>
<feature type="region of interest" description="Disordered" evidence="4">
    <location>
        <begin position="1"/>
        <end position="39"/>
    </location>
</feature>
<feature type="region of interest" description="Disordered" evidence="4">
    <location>
        <begin position="61"/>
        <end position="85"/>
    </location>
</feature>
<feature type="short sequence motif" description="Nuclear localization signal" evidence="3">
    <location>
        <begin position="15"/>
        <end position="22"/>
    </location>
</feature>
<feature type="compositionally biased region" description="Basic and acidic residues" evidence="4">
    <location>
        <begin position="1"/>
        <end position="22"/>
    </location>
</feature>
<dbReference type="EMBL" id="CH408155">
    <property type="protein sequence ID" value="EDK36944.2"/>
    <property type="molecule type" value="Genomic_DNA"/>
</dbReference>
<dbReference type="RefSeq" id="XP_001487665.1">
    <property type="nucleotide sequence ID" value="XM_001487615.1"/>
</dbReference>
<dbReference type="SMR" id="A5DCN7"/>
<dbReference type="FunCoup" id="A5DCN7">
    <property type="interactions" value="1207"/>
</dbReference>
<dbReference type="STRING" id="294746.A5DCN7"/>
<dbReference type="GeneID" id="5128894"/>
<dbReference type="KEGG" id="pgu:PGUG_01042"/>
<dbReference type="VEuPathDB" id="FungiDB:PGUG_01042"/>
<dbReference type="eggNOG" id="KOG3163">
    <property type="taxonomic scope" value="Eukaryota"/>
</dbReference>
<dbReference type="HOGENOM" id="CLU_1070048_0_0_1"/>
<dbReference type="InParanoid" id="A5DCN7"/>
<dbReference type="OMA" id="TNTPEND"/>
<dbReference type="OrthoDB" id="1847590at2759"/>
<dbReference type="Proteomes" id="UP000001997">
    <property type="component" value="Unassembled WGS sequence"/>
</dbReference>
<dbReference type="GO" id="GO:0005730">
    <property type="term" value="C:nucleolus"/>
    <property type="evidence" value="ECO:0007669"/>
    <property type="project" value="UniProtKB-SubCell"/>
</dbReference>
<dbReference type="GO" id="GO:0030687">
    <property type="term" value="C:preribosome, large subunit precursor"/>
    <property type="evidence" value="ECO:0007669"/>
    <property type="project" value="EnsemblFungi"/>
</dbReference>
<dbReference type="GO" id="GO:0000466">
    <property type="term" value="P:maturation of 5.8S rRNA from tricistronic rRNA transcript (SSU-rRNA, 5.8S rRNA, LSU-rRNA)"/>
    <property type="evidence" value="ECO:0007669"/>
    <property type="project" value="EnsemblFungi"/>
</dbReference>
<dbReference type="GO" id="GO:0000463">
    <property type="term" value="P:maturation of LSU-rRNA from tricistronic rRNA transcript (SSU-rRNA, 5.8S rRNA, LSU-rRNA)"/>
    <property type="evidence" value="ECO:0007669"/>
    <property type="project" value="EnsemblFungi"/>
</dbReference>
<dbReference type="CDD" id="cd11381">
    <property type="entry name" value="NSA2"/>
    <property type="match status" value="1"/>
</dbReference>
<dbReference type="FunFam" id="2.40.10.310:FF:000001">
    <property type="entry name" value="NSA2, ribosome biogenesis homolog"/>
    <property type="match status" value="1"/>
</dbReference>
<dbReference type="Gene3D" id="2.40.10.310">
    <property type="match status" value="1"/>
</dbReference>
<dbReference type="InterPro" id="IPR039411">
    <property type="entry name" value="NSA2_fam"/>
</dbReference>
<dbReference type="InterPro" id="IPR022309">
    <property type="entry name" value="Ribosomal_Se8/biogenesis_NSA2"/>
</dbReference>
<dbReference type="PANTHER" id="PTHR12642">
    <property type="entry name" value="RIBOSOME BIOGENESIS PROTEIN NSA2 HOMOLOG"/>
    <property type="match status" value="1"/>
</dbReference>
<dbReference type="Pfam" id="PF01201">
    <property type="entry name" value="Ribosomal_S8e"/>
    <property type="match status" value="1"/>
</dbReference>